<reference key="1">
    <citation type="journal article" date="2009" name="BMC Genomics">
        <title>Genome evolution driven by host adaptations results in a more virulent and antimicrobial-resistant Streptococcus pneumoniae serotype 14.</title>
        <authorList>
            <person name="Ding F."/>
            <person name="Tang P."/>
            <person name="Hsu M.-H."/>
            <person name="Cui P."/>
            <person name="Hu S."/>
            <person name="Yu J."/>
            <person name="Chiu C.-H."/>
        </authorList>
    </citation>
    <scope>NUCLEOTIDE SEQUENCE [LARGE SCALE GENOMIC DNA]</scope>
    <source>
        <strain>CGSP14</strain>
    </source>
</reference>
<proteinExistence type="inferred from homology"/>
<dbReference type="EC" id="4.3.3.7" evidence="1"/>
<dbReference type="EMBL" id="CP001033">
    <property type="protein sequence ID" value="ACB90246.1"/>
    <property type="molecule type" value="Genomic_DNA"/>
</dbReference>
<dbReference type="RefSeq" id="WP_000121637.1">
    <property type="nucleotide sequence ID" value="NC_010582.1"/>
</dbReference>
<dbReference type="SMR" id="B2IPH2"/>
<dbReference type="KEGG" id="spw:SPCG_0994"/>
<dbReference type="HOGENOM" id="CLU_049343_7_1_9"/>
<dbReference type="UniPathway" id="UPA00034">
    <property type="reaction ID" value="UER00017"/>
</dbReference>
<dbReference type="GO" id="GO:0005829">
    <property type="term" value="C:cytosol"/>
    <property type="evidence" value="ECO:0007669"/>
    <property type="project" value="TreeGrafter"/>
</dbReference>
<dbReference type="GO" id="GO:0008840">
    <property type="term" value="F:4-hydroxy-tetrahydrodipicolinate synthase activity"/>
    <property type="evidence" value="ECO:0007669"/>
    <property type="project" value="UniProtKB-UniRule"/>
</dbReference>
<dbReference type="GO" id="GO:0019877">
    <property type="term" value="P:diaminopimelate biosynthetic process"/>
    <property type="evidence" value="ECO:0007669"/>
    <property type="project" value="UniProtKB-UniRule"/>
</dbReference>
<dbReference type="GO" id="GO:0009089">
    <property type="term" value="P:lysine biosynthetic process via diaminopimelate"/>
    <property type="evidence" value="ECO:0007669"/>
    <property type="project" value="UniProtKB-UniRule"/>
</dbReference>
<dbReference type="CDD" id="cd00950">
    <property type="entry name" value="DHDPS"/>
    <property type="match status" value="1"/>
</dbReference>
<dbReference type="Gene3D" id="3.20.20.70">
    <property type="entry name" value="Aldolase class I"/>
    <property type="match status" value="1"/>
</dbReference>
<dbReference type="HAMAP" id="MF_00418">
    <property type="entry name" value="DapA"/>
    <property type="match status" value="1"/>
</dbReference>
<dbReference type="InterPro" id="IPR013785">
    <property type="entry name" value="Aldolase_TIM"/>
</dbReference>
<dbReference type="InterPro" id="IPR005263">
    <property type="entry name" value="DapA"/>
</dbReference>
<dbReference type="InterPro" id="IPR002220">
    <property type="entry name" value="DapA-like"/>
</dbReference>
<dbReference type="InterPro" id="IPR020625">
    <property type="entry name" value="Schiff_base-form_aldolases_AS"/>
</dbReference>
<dbReference type="NCBIfam" id="TIGR00674">
    <property type="entry name" value="dapA"/>
    <property type="match status" value="1"/>
</dbReference>
<dbReference type="PANTHER" id="PTHR12128:SF66">
    <property type="entry name" value="4-HYDROXY-2-OXOGLUTARATE ALDOLASE, MITOCHONDRIAL"/>
    <property type="match status" value="1"/>
</dbReference>
<dbReference type="PANTHER" id="PTHR12128">
    <property type="entry name" value="DIHYDRODIPICOLINATE SYNTHASE"/>
    <property type="match status" value="1"/>
</dbReference>
<dbReference type="Pfam" id="PF00701">
    <property type="entry name" value="DHDPS"/>
    <property type="match status" value="1"/>
</dbReference>
<dbReference type="PIRSF" id="PIRSF001365">
    <property type="entry name" value="DHDPS"/>
    <property type="match status" value="1"/>
</dbReference>
<dbReference type="PRINTS" id="PR00146">
    <property type="entry name" value="DHPICSNTHASE"/>
</dbReference>
<dbReference type="SMART" id="SM01130">
    <property type="entry name" value="DHDPS"/>
    <property type="match status" value="1"/>
</dbReference>
<dbReference type="SUPFAM" id="SSF51569">
    <property type="entry name" value="Aldolase"/>
    <property type="match status" value="1"/>
</dbReference>
<dbReference type="PROSITE" id="PS00666">
    <property type="entry name" value="DHDPS_2"/>
    <property type="match status" value="1"/>
</dbReference>
<feature type="chain" id="PRO_1000124070" description="4-hydroxy-tetrahydrodipicolinate synthase">
    <location>
        <begin position="1"/>
        <end position="311"/>
    </location>
</feature>
<feature type="active site" description="Proton donor/acceptor" evidence="1">
    <location>
        <position position="140"/>
    </location>
</feature>
<feature type="active site" description="Schiff-base intermediate with substrate" evidence="1">
    <location>
        <position position="168"/>
    </location>
</feature>
<feature type="binding site" evidence="1">
    <location>
        <position position="51"/>
    </location>
    <ligand>
        <name>pyruvate</name>
        <dbReference type="ChEBI" id="CHEBI:15361"/>
    </ligand>
</feature>
<feature type="binding site" evidence="1">
    <location>
        <position position="209"/>
    </location>
    <ligand>
        <name>pyruvate</name>
        <dbReference type="ChEBI" id="CHEBI:15361"/>
    </ligand>
</feature>
<feature type="site" description="Part of a proton relay during catalysis" evidence="1">
    <location>
        <position position="50"/>
    </location>
</feature>
<feature type="site" description="Part of a proton relay during catalysis" evidence="1">
    <location>
        <position position="114"/>
    </location>
</feature>
<protein>
    <recommendedName>
        <fullName evidence="1">4-hydroxy-tetrahydrodipicolinate synthase</fullName>
        <shortName evidence="1">HTPA synthase</shortName>
        <ecNumber evidence="1">4.3.3.7</ecNumber>
    </recommendedName>
</protein>
<keyword id="KW-0028">Amino-acid biosynthesis</keyword>
<keyword id="KW-0963">Cytoplasm</keyword>
<keyword id="KW-0220">Diaminopimelate biosynthesis</keyword>
<keyword id="KW-0456">Lyase</keyword>
<keyword id="KW-0457">Lysine biosynthesis</keyword>
<keyword id="KW-0704">Schiff base</keyword>
<accession>B2IPH2</accession>
<comment type="function">
    <text evidence="1">Catalyzes the condensation of (S)-aspartate-beta-semialdehyde [(S)-ASA] and pyruvate to 4-hydroxy-tetrahydrodipicolinate (HTPA).</text>
</comment>
<comment type="catalytic activity">
    <reaction evidence="1">
        <text>L-aspartate 4-semialdehyde + pyruvate = (2S,4S)-4-hydroxy-2,3,4,5-tetrahydrodipicolinate + H2O + H(+)</text>
        <dbReference type="Rhea" id="RHEA:34171"/>
        <dbReference type="ChEBI" id="CHEBI:15361"/>
        <dbReference type="ChEBI" id="CHEBI:15377"/>
        <dbReference type="ChEBI" id="CHEBI:15378"/>
        <dbReference type="ChEBI" id="CHEBI:67139"/>
        <dbReference type="ChEBI" id="CHEBI:537519"/>
        <dbReference type="EC" id="4.3.3.7"/>
    </reaction>
</comment>
<comment type="pathway">
    <text evidence="1">Amino-acid biosynthesis; L-lysine biosynthesis via DAP pathway; (S)-tetrahydrodipicolinate from L-aspartate: step 3/4.</text>
</comment>
<comment type="subunit">
    <text evidence="1">Homotetramer; dimer of dimers.</text>
</comment>
<comment type="subcellular location">
    <subcellularLocation>
        <location evidence="1">Cytoplasm</location>
    </subcellularLocation>
</comment>
<comment type="similarity">
    <text evidence="1">Belongs to the DapA family.</text>
</comment>
<comment type="caution">
    <text evidence="2">Was originally thought to be a dihydrodipicolinate synthase (DHDPS), catalyzing the condensation of (S)-aspartate-beta-semialdehyde [(S)-ASA] and pyruvate to dihydrodipicolinate (DHDP). However, it was shown in E.coli that the product of the enzymatic reaction is not dihydrodipicolinate but in fact (4S)-4-hydroxy-2,3,4,5-tetrahydro-(2S)-dipicolinic acid (HTPA), and that the consecutive dehydration reaction leading to DHDP is not spontaneous but catalyzed by DapB.</text>
</comment>
<name>DAPA_STRPS</name>
<evidence type="ECO:0000255" key="1">
    <source>
        <dbReference type="HAMAP-Rule" id="MF_00418"/>
    </source>
</evidence>
<evidence type="ECO:0000305" key="2"/>
<organism>
    <name type="scientific">Streptococcus pneumoniae (strain CGSP14)</name>
    <dbReference type="NCBI Taxonomy" id="516950"/>
    <lineage>
        <taxon>Bacteria</taxon>
        <taxon>Bacillati</taxon>
        <taxon>Bacillota</taxon>
        <taxon>Bacilli</taxon>
        <taxon>Lactobacillales</taxon>
        <taxon>Streptococcaceae</taxon>
        <taxon>Streptococcus</taxon>
    </lineage>
</organism>
<sequence>MSYQDLKECKIITAFITPFHEDGSINFDAIPALIEHLLDHHTDGILLAGTTAESPTLTHDEELELFAAVQKIVNGRVPLIAGVGTNDTRDSIEFVKEVAEFGGFAAGLAIVPYYNKPSQEGMYQHFKAIADASDLPIIIYNIPGRVVVELTPETMLRLADHPNIIGVKECTSLANMAYLIEHKPEEFLVYTGEDGDAFHAMNLGADGVISVASHTNGDEMHEMFTAIAESDMKKAAAIQRKFIPKVNALFSYPSPAPVKAVLNYMGFEAGPTRLPLVPAPEEDAKRIIKVVVDGDYEATKATVTGVLRPDY</sequence>
<gene>
    <name evidence="1" type="primary">dapA</name>
    <name type="ordered locus">SPCG_0994</name>
</gene>